<dbReference type="EC" id="4.2.1.11" evidence="1"/>
<dbReference type="EMBL" id="AE010300">
    <property type="protein sequence ID" value="AAN49150.1"/>
    <property type="molecule type" value="Genomic_DNA"/>
</dbReference>
<dbReference type="RefSeq" id="NP_712132.1">
    <property type="nucleotide sequence ID" value="NC_004342.2"/>
</dbReference>
<dbReference type="RefSeq" id="WP_000018115.1">
    <property type="nucleotide sequence ID" value="NC_004342.2"/>
</dbReference>
<dbReference type="SMR" id="Q8F4T8"/>
<dbReference type="FunCoup" id="Q8F4T8">
    <property type="interactions" value="431"/>
</dbReference>
<dbReference type="STRING" id="189518.LA_1951"/>
<dbReference type="PaxDb" id="189518-LA_1951"/>
<dbReference type="EnsemblBacteria" id="AAN49150">
    <property type="protein sequence ID" value="AAN49150"/>
    <property type="gene ID" value="LA_1951"/>
</dbReference>
<dbReference type="GeneID" id="61141848"/>
<dbReference type="KEGG" id="lil:LA_1951"/>
<dbReference type="PATRIC" id="fig|189518.3.peg.1943"/>
<dbReference type="HOGENOM" id="CLU_031223_2_1_12"/>
<dbReference type="InParanoid" id="Q8F4T8"/>
<dbReference type="OrthoDB" id="9804716at2"/>
<dbReference type="UniPathway" id="UPA00109">
    <property type="reaction ID" value="UER00187"/>
</dbReference>
<dbReference type="Proteomes" id="UP000001408">
    <property type="component" value="Chromosome I"/>
</dbReference>
<dbReference type="GO" id="GO:0009986">
    <property type="term" value="C:cell surface"/>
    <property type="evidence" value="ECO:0007669"/>
    <property type="project" value="UniProtKB-SubCell"/>
</dbReference>
<dbReference type="GO" id="GO:0005576">
    <property type="term" value="C:extracellular region"/>
    <property type="evidence" value="ECO:0007669"/>
    <property type="project" value="UniProtKB-SubCell"/>
</dbReference>
<dbReference type="GO" id="GO:0000015">
    <property type="term" value="C:phosphopyruvate hydratase complex"/>
    <property type="evidence" value="ECO:0000318"/>
    <property type="project" value="GO_Central"/>
</dbReference>
<dbReference type="GO" id="GO:0000287">
    <property type="term" value="F:magnesium ion binding"/>
    <property type="evidence" value="ECO:0007669"/>
    <property type="project" value="UniProtKB-UniRule"/>
</dbReference>
<dbReference type="GO" id="GO:0004634">
    <property type="term" value="F:phosphopyruvate hydratase activity"/>
    <property type="evidence" value="ECO:0000318"/>
    <property type="project" value="GO_Central"/>
</dbReference>
<dbReference type="GO" id="GO:0006096">
    <property type="term" value="P:glycolytic process"/>
    <property type="evidence" value="ECO:0000318"/>
    <property type="project" value="GO_Central"/>
</dbReference>
<dbReference type="CDD" id="cd03313">
    <property type="entry name" value="enolase"/>
    <property type="match status" value="1"/>
</dbReference>
<dbReference type="FunFam" id="3.20.20.120:FF:000001">
    <property type="entry name" value="Enolase"/>
    <property type="match status" value="1"/>
</dbReference>
<dbReference type="FunFam" id="3.30.390.10:FF:000001">
    <property type="entry name" value="Enolase"/>
    <property type="match status" value="1"/>
</dbReference>
<dbReference type="Gene3D" id="3.20.20.120">
    <property type="entry name" value="Enolase-like C-terminal domain"/>
    <property type="match status" value="1"/>
</dbReference>
<dbReference type="Gene3D" id="3.30.390.10">
    <property type="entry name" value="Enolase-like, N-terminal domain"/>
    <property type="match status" value="1"/>
</dbReference>
<dbReference type="HAMAP" id="MF_00318">
    <property type="entry name" value="Enolase"/>
    <property type="match status" value="1"/>
</dbReference>
<dbReference type="InterPro" id="IPR000941">
    <property type="entry name" value="Enolase"/>
</dbReference>
<dbReference type="InterPro" id="IPR036849">
    <property type="entry name" value="Enolase-like_C_sf"/>
</dbReference>
<dbReference type="InterPro" id="IPR029017">
    <property type="entry name" value="Enolase-like_N"/>
</dbReference>
<dbReference type="InterPro" id="IPR020810">
    <property type="entry name" value="Enolase_C"/>
</dbReference>
<dbReference type="InterPro" id="IPR020809">
    <property type="entry name" value="Enolase_CS"/>
</dbReference>
<dbReference type="InterPro" id="IPR020811">
    <property type="entry name" value="Enolase_N"/>
</dbReference>
<dbReference type="NCBIfam" id="TIGR01060">
    <property type="entry name" value="eno"/>
    <property type="match status" value="1"/>
</dbReference>
<dbReference type="PANTHER" id="PTHR11902">
    <property type="entry name" value="ENOLASE"/>
    <property type="match status" value="1"/>
</dbReference>
<dbReference type="PANTHER" id="PTHR11902:SF1">
    <property type="entry name" value="ENOLASE"/>
    <property type="match status" value="1"/>
</dbReference>
<dbReference type="Pfam" id="PF00113">
    <property type="entry name" value="Enolase_C"/>
    <property type="match status" value="1"/>
</dbReference>
<dbReference type="Pfam" id="PF03952">
    <property type="entry name" value="Enolase_N"/>
    <property type="match status" value="1"/>
</dbReference>
<dbReference type="PIRSF" id="PIRSF001400">
    <property type="entry name" value="Enolase"/>
    <property type="match status" value="1"/>
</dbReference>
<dbReference type="PRINTS" id="PR00148">
    <property type="entry name" value="ENOLASE"/>
</dbReference>
<dbReference type="SFLD" id="SFLDF00002">
    <property type="entry name" value="enolase"/>
    <property type="match status" value="1"/>
</dbReference>
<dbReference type="SFLD" id="SFLDG00178">
    <property type="entry name" value="enolase"/>
    <property type="match status" value="1"/>
</dbReference>
<dbReference type="SMART" id="SM01192">
    <property type="entry name" value="Enolase_C"/>
    <property type="match status" value="1"/>
</dbReference>
<dbReference type="SMART" id="SM01193">
    <property type="entry name" value="Enolase_N"/>
    <property type="match status" value="1"/>
</dbReference>
<dbReference type="SUPFAM" id="SSF51604">
    <property type="entry name" value="Enolase C-terminal domain-like"/>
    <property type="match status" value="1"/>
</dbReference>
<dbReference type="SUPFAM" id="SSF54826">
    <property type="entry name" value="Enolase N-terminal domain-like"/>
    <property type="match status" value="1"/>
</dbReference>
<dbReference type="PROSITE" id="PS00164">
    <property type="entry name" value="ENOLASE"/>
    <property type="match status" value="1"/>
</dbReference>
<gene>
    <name evidence="1" type="primary">eno</name>
    <name type="ordered locus">LA_1951</name>
</gene>
<keyword id="KW-0963">Cytoplasm</keyword>
<keyword id="KW-0324">Glycolysis</keyword>
<keyword id="KW-0456">Lyase</keyword>
<keyword id="KW-0460">Magnesium</keyword>
<keyword id="KW-0479">Metal-binding</keyword>
<keyword id="KW-1185">Reference proteome</keyword>
<keyword id="KW-0964">Secreted</keyword>
<sequence length="432" mass="47045">MSHHSQIQKIQAREIMDSRGNPTVEVDVILLDGSFGRAAVPSGASTGEYEAVELRDGDKHRYLGKGVLKAVEHVNLKIQEVLKGENAIDQNRIDQLMLDADGTKNKGKLGANAILGTSLAVAKAAAAHSKLPLYRYIGGNFARELPVPMMNIINGGAHADNNVDFQEFMILPVGAKSFREALRMGAEIFHSLKSVLKGKKLNTAVGDEGGFAPDLTSNVEAIEVILQAIEKAGYKPEKDVLLGLDAASSEFYDKSKKKYVLGAENNKEFSSAELVDYYANLVSKYPIITIEDGLDENDWDGWKLLSEKLGKKIQLVGDDLFVTNIEKLSKGISSGVGNSILIKVNQIGSLSETLSSIEMAKKAKYTNVVSHRSGETEDVTISHIAVATNAGQIKTGSLSRTDRIAKYNELLRIEEELGKSAVYKGRETFYNL</sequence>
<proteinExistence type="inferred from homology"/>
<protein>
    <recommendedName>
        <fullName evidence="1">Enolase</fullName>
        <ecNumber evidence="1">4.2.1.11</ecNumber>
    </recommendedName>
    <alternativeName>
        <fullName evidence="1">2-phospho-D-glycerate hydro-lyase</fullName>
    </alternativeName>
    <alternativeName>
        <fullName evidence="1">2-phosphoglycerate dehydratase</fullName>
    </alternativeName>
</protein>
<feature type="chain" id="PRO_0000133913" description="Enolase">
    <location>
        <begin position="1"/>
        <end position="432"/>
    </location>
</feature>
<feature type="active site" description="Proton donor" evidence="1">
    <location>
        <position position="208"/>
    </location>
</feature>
<feature type="active site" description="Proton acceptor" evidence="1">
    <location>
        <position position="343"/>
    </location>
</feature>
<feature type="binding site" evidence="1">
    <location>
        <position position="166"/>
    </location>
    <ligand>
        <name>(2R)-2-phosphoglycerate</name>
        <dbReference type="ChEBI" id="CHEBI:58289"/>
    </ligand>
</feature>
<feature type="binding site" evidence="1">
    <location>
        <position position="245"/>
    </location>
    <ligand>
        <name>Mg(2+)</name>
        <dbReference type="ChEBI" id="CHEBI:18420"/>
    </ligand>
</feature>
<feature type="binding site" evidence="1">
    <location>
        <position position="291"/>
    </location>
    <ligand>
        <name>Mg(2+)</name>
        <dbReference type="ChEBI" id="CHEBI:18420"/>
    </ligand>
</feature>
<feature type="binding site" evidence="1">
    <location>
        <position position="318"/>
    </location>
    <ligand>
        <name>Mg(2+)</name>
        <dbReference type="ChEBI" id="CHEBI:18420"/>
    </ligand>
</feature>
<feature type="binding site" evidence="1">
    <location>
        <position position="343"/>
    </location>
    <ligand>
        <name>(2R)-2-phosphoglycerate</name>
        <dbReference type="ChEBI" id="CHEBI:58289"/>
    </ligand>
</feature>
<feature type="binding site" evidence="1">
    <location>
        <position position="372"/>
    </location>
    <ligand>
        <name>(2R)-2-phosphoglycerate</name>
        <dbReference type="ChEBI" id="CHEBI:58289"/>
    </ligand>
</feature>
<feature type="binding site" evidence="1">
    <location>
        <position position="373"/>
    </location>
    <ligand>
        <name>(2R)-2-phosphoglycerate</name>
        <dbReference type="ChEBI" id="CHEBI:58289"/>
    </ligand>
</feature>
<feature type="binding site" evidence="1">
    <location>
        <position position="394"/>
    </location>
    <ligand>
        <name>(2R)-2-phosphoglycerate</name>
        <dbReference type="ChEBI" id="CHEBI:58289"/>
    </ligand>
</feature>
<reference key="1">
    <citation type="journal article" date="2003" name="Nature">
        <title>Unique physiological and pathogenic features of Leptospira interrogans revealed by whole-genome sequencing.</title>
        <authorList>
            <person name="Ren S.-X."/>
            <person name="Fu G."/>
            <person name="Jiang X.-G."/>
            <person name="Zeng R."/>
            <person name="Miao Y.-G."/>
            <person name="Xu H."/>
            <person name="Zhang Y.-X."/>
            <person name="Xiong H."/>
            <person name="Lu G."/>
            <person name="Lu L.-F."/>
            <person name="Jiang H.-Q."/>
            <person name="Jia J."/>
            <person name="Tu Y.-F."/>
            <person name="Jiang J.-X."/>
            <person name="Gu W.-Y."/>
            <person name="Zhang Y.-Q."/>
            <person name="Cai Z."/>
            <person name="Sheng H.-H."/>
            <person name="Yin H.-F."/>
            <person name="Zhang Y."/>
            <person name="Zhu G.-F."/>
            <person name="Wan M."/>
            <person name="Huang H.-L."/>
            <person name="Qian Z."/>
            <person name="Wang S.-Y."/>
            <person name="Ma W."/>
            <person name="Yao Z.-J."/>
            <person name="Shen Y."/>
            <person name="Qiang B.-Q."/>
            <person name="Xia Q.-C."/>
            <person name="Guo X.-K."/>
            <person name="Danchin A."/>
            <person name="Saint Girons I."/>
            <person name="Somerville R.L."/>
            <person name="Wen Y.-M."/>
            <person name="Shi M.-H."/>
            <person name="Chen Z."/>
            <person name="Xu J.-G."/>
            <person name="Zhao G.-P."/>
        </authorList>
    </citation>
    <scope>NUCLEOTIDE SEQUENCE [LARGE SCALE GENOMIC DNA]</scope>
    <source>
        <strain>56601</strain>
    </source>
</reference>
<organism>
    <name type="scientific">Leptospira interrogans serogroup Icterohaemorrhagiae serovar Lai (strain 56601)</name>
    <dbReference type="NCBI Taxonomy" id="189518"/>
    <lineage>
        <taxon>Bacteria</taxon>
        <taxon>Pseudomonadati</taxon>
        <taxon>Spirochaetota</taxon>
        <taxon>Spirochaetia</taxon>
        <taxon>Leptospirales</taxon>
        <taxon>Leptospiraceae</taxon>
        <taxon>Leptospira</taxon>
    </lineage>
</organism>
<comment type="function">
    <text evidence="1">Catalyzes the reversible conversion of 2-phosphoglycerate (2-PG) into phosphoenolpyruvate (PEP). It is essential for the degradation of carbohydrates via glycolysis.</text>
</comment>
<comment type="catalytic activity">
    <reaction evidence="1">
        <text>(2R)-2-phosphoglycerate = phosphoenolpyruvate + H2O</text>
        <dbReference type="Rhea" id="RHEA:10164"/>
        <dbReference type="ChEBI" id="CHEBI:15377"/>
        <dbReference type="ChEBI" id="CHEBI:58289"/>
        <dbReference type="ChEBI" id="CHEBI:58702"/>
        <dbReference type="EC" id="4.2.1.11"/>
    </reaction>
</comment>
<comment type="cofactor">
    <cofactor evidence="1">
        <name>Mg(2+)</name>
        <dbReference type="ChEBI" id="CHEBI:18420"/>
    </cofactor>
    <text evidence="1">Binds a second Mg(2+) ion via substrate during catalysis.</text>
</comment>
<comment type="pathway">
    <text evidence="1">Carbohydrate degradation; glycolysis; pyruvate from D-glyceraldehyde 3-phosphate: step 4/5.</text>
</comment>
<comment type="subcellular location">
    <subcellularLocation>
        <location evidence="1">Cytoplasm</location>
    </subcellularLocation>
    <subcellularLocation>
        <location evidence="1">Secreted</location>
    </subcellularLocation>
    <subcellularLocation>
        <location evidence="1">Cell surface</location>
    </subcellularLocation>
    <text evidence="1">Fractions of enolase are present in both the cytoplasm and on the cell surface.</text>
</comment>
<comment type="similarity">
    <text evidence="1">Belongs to the enolase family.</text>
</comment>
<evidence type="ECO:0000255" key="1">
    <source>
        <dbReference type="HAMAP-Rule" id="MF_00318"/>
    </source>
</evidence>
<accession>Q8F4T8</accession>
<name>ENO_LEPIN</name>